<organism>
    <name type="scientific">Lepidium virginicum</name>
    <name type="common">Virginia pepperweed</name>
    <dbReference type="NCBI Taxonomy" id="59292"/>
    <lineage>
        <taxon>Eukaryota</taxon>
        <taxon>Viridiplantae</taxon>
        <taxon>Streptophyta</taxon>
        <taxon>Embryophyta</taxon>
        <taxon>Tracheophyta</taxon>
        <taxon>Spermatophyta</taxon>
        <taxon>Magnoliopsida</taxon>
        <taxon>eudicotyledons</taxon>
        <taxon>Gunneridae</taxon>
        <taxon>Pentapetalae</taxon>
        <taxon>rosids</taxon>
        <taxon>malvids</taxon>
        <taxon>Brassicales</taxon>
        <taxon>Brassicaceae</taxon>
        <taxon>Lepidieae</taxon>
        <taxon>Lepidium</taxon>
    </lineage>
</organism>
<dbReference type="EC" id="7.1.2.2" evidence="2"/>
<dbReference type="EMBL" id="AP009374">
    <property type="protein sequence ID" value="BAF50468.1"/>
    <property type="molecule type" value="Genomic_DNA"/>
</dbReference>
<dbReference type="RefSeq" id="YP_001123644.1">
    <property type="nucleotide sequence ID" value="NC_009273.1"/>
</dbReference>
<dbReference type="SMR" id="A4QLB3"/>
<dbReference type="GeneID" id="4962065"/>
<dbReference type="GO" id="GO:0009535">
    <property type="term" value="C:chloroplast thylakoid membrane"/>
    <property type="evidence" value="ECO:0007669"/>
    <property type="project" value="UniProtKB-SubCell"/>
</dbReference>
<dbReference type="GO" id="GO:0005739">
    <property type="term" value="C:mitochondrion"/>
    <property type="evidence" value="ECO:0007669"/>
    <property type="project" value="GOC"/>
</dbReference>
<dbReference type="GO" id="GO:0045259">
    <property type="term" value="C:proton-transporting ATP synthase complex"/>
    <property type="evidence" value="ECO:0007669"/>
    <property type="project" value="UniProtKB-KW"/>
</dbReference>
<dbReference type="GO" id="GO:0005524">
    <property type="term" value="F:ATP binding"/>
    <property type="evidence" value="ECO:0007669"/>
    <property type="project" value="UniProtKB-UniRule"/>
</dbReference>
<dbReference type="GO" id="GO:0016887">
    <property type="term" value="F:ATP hydrolysis activity"/>
    <property type="evidence" value="ECO:0007669"/>
    <property type="project" value="InterPro"/>
</dbReference>
<dbReference type="GO" id="GO:0046933">
    <property type="term" value="F:proton-transporting ATP synthase activity, rotational mechanism"/>
    <property type="evidence" value="ECO:0007669"/>
    <property type="project" value="UniProtKB-UniRule"/>
</dbReference>
<dbReference type="GO" id="GO:0042776">
    <property type="term" value="P:proton motive force-driven mitochondrial ATP synthesis"/>
    <property type="evidence" value="ECO:0007669"/>
    <property type="project" value="TreeGrafter"/>
</dbReference>
<dbReference type="CDD" id="cd18110">
    <property type="entry name" value="ATP-synt_F1_beta_C"/>
    <property type="match status" value="1"/>
</dbReference>
<dbReference type="CDD" id="cd18115">
    <property type="entry name" value="ATP-synt_F1_beta_N"/>
    <property type="match status" value="1"/>
</dbReference>
<dbReference type="CDD" id="cd01133">
    <property type="entry name" value="F1-ATPase_beta_CD"/>
    <property type="match status" value="1"/>
</dbReference>
<dbReference type="FunFam" id="1.10.1140.10:FF:000001">
    <property type="entry name" value="ATP synthase subunit beta"/>
    <property type="match status" value="1"/>
</dbReference>
<dbReference type="FunFam" id="3.40.50.12240:FF:000006">
    <property type="entry name" value="ATP synthase subunit beta"/>
    <property type="match status" value="1"/>
</dbReference>
<dbReference type="FunFam" id="3.40.50.300:FF:000004">
    <property type="entry name" value="ATP synthase subunit beta"/>
    <property type="match status" value="1"/>
</dbReference>
<dbReference type="FunFam" id="2.40.10.170:FF:000002">
    <property type="entry name" value="ATP synthase subunit beta, chloroplastic"/>
    <property type="match status" value="1"/>
</dbReference>
<dbReference type="Gene3D" id="2.40.10.170">
    <property type="match status" value="1"/>
</dbReference>
<dbReference type="Gene3D" id="1.10.1140.10">
    <property type="entry name" value="Bovine Mitochondrial F1-atpase, Atp Synthase Beta Chain, Chain D, domain 3"/>
    <property type="match status" value="1"/>
</dbReference>
<dbReference type="Gene3D" id="3.40.50.300">
    <property type="entry name" value="P-loop containing nucleotide triphosphate hydrolases"/>
    <property type="match status" value="1"/>
</dbReference>
<dbReference type="HAMAP" id="MF_01347">
    <property type="entry name" value="ATP_synth_beta_bact"/>
    <property type="match status" value="1"/>
</dbReference>
<dbReference type="InterPro" id="IPR003593">
    <property type="entry name" value="AAA+_ATPase"/>
</dbReference>
<dbReference type="InterPro" id="IPR055190">
    <property type="entry name" value="ATP-synt_VA_C"/>
</dbReference>
<dbReference type="InterPro" id="IPR005722">
    <property type="entry name" value="ATP_synth_F1_bsu"/>
</dbReference>
<dbReference type="InterPro" id="IPR020003">
    <property type="entry name" value="ATPase_a/bsu_AS"/>
</dbReference>
<dbReference type="InterPro" id="IPR050053">
    <property type="entry name" value="ATPase_alpha/beta_chains"/>
</dbReference>
<dbReference type="InterPro" id="IPR004100">
    <property type="entry name" value="ATPase_F1/V1/A1_a/bsu_N"/>
</dbReference>
<dbReference type="InterPro" id="IPR036121">
    <property type="entry name" value="ATPase_F1/V1/A1_a/bsu_N_sf"/>
</dbReference>
<dbReference type="InterPro" id="IPR000194">
    <property type="entry name" value="ATPase_F1/V1/A1_a/bsu_nucl-bd"/>
</dbReference>
<dbReference type="InterPro" id="IPR024034">
    <property type="entry name" value="ATPase_F1/V1_b/a_C"/>
</dbReference>
<dbReference type="InterPro" id="IPR027417">
    <property type="entry name" value="P-loop_NTPase"/>
</dbReference>
<dbReference type="NCBIfam" id="TIGR01039">
    <property type="entry name" value="atpD"/>
    <property type="match status" value="1"/>
</dbReference>
<dbReference type="PANTHER" id="PTHR15184">
    <property type="entry name" value="ATP SYNTHASE"/>
    <property type="match status" value="1"/>
</dbReference>
<dbReference type="PANTHER" id="PTHR15184:SF71">
    <property type="entry name" value="ATP SYNTHASE SUBUNIT BETA, MITOCHONDRIAL"/>
    <property type="match status" value="1"/>
</dbReference>
<dbReference type="Pfam" id="PF00006">
    <property type="entry name" value="ATP-synt_ab"/>
    <property type="match status" value="1"/>
</dbReference>
<dbReference type="Pfam" id="PF02874">
    <property type="entry name" value="ATP-synt_ab_N"/>
    <property type="match status" value="1"/>
</dbReference>
<dbReference type="Pfam" id="PF22919">
    <property type="entry name" value="ATP-synt_VA_C"/>
    <property type="match status" value="1"/>
</dbReference>
<dbReference type="SMART" id="SM00382">
    <property type="entry name" value="AAA"/>
    <property type="match status" value="1"/>
</dbReference>
<dbReference type="SUPFAM" id="SSF47917">
    <property type="entry name" value="C-terminal domain of alpha and beta subunits of F1 ATP synthase"/>
    <property type="match status" value="1"/>
</dbReference>
<dbReference type="SUPFAM" id="SSF50615">
    <property type="entry name" value="N-terminal domain of alpha and beta subunits of F1 ATP synthase"/>
    <property type="match status" value="1"/>
</dbReference>
<dbReference type="SUPFAM" id="SSF52540">
    <property type="entry name" value="P-loop containing nucleoside triphosphate hydrolases"/>
    <property type="match status" value="1"/>
</dbReference>
<dbReference type="PROSITE" id="PS00152">
    <property type="entry name" value="ATPASE_ALPHA_BETA"/>
    <property type="match status" value="1"/>
</dbReference>
<name>ATPB_LEPVR</name>
<accession>A4QLB3</accession>
<geneLocation type="chloroplast"/>
<reference key="1">
    <citation type="submission" date="2007-03" db="EMBL/GenBank/DDBJ databases">
        <title>Sequencing analysis of Lepidium virginicum JO26 chloroplast DNA.</title>
        <authorList>
            <person name="Hosouchi T."/>
            <person name="Tsuruoka H."/>
            <person name="Kotani H."/>
        </authorList>
    </citation>
    <scope>NUCLEOTIDE SEQUENCE [LARGE SCALE GENOMIC DNA]</scope>
</reference>
<sequence length="502" mass="54237">MRINLNPANAGLDLDVSIGENKNLGRIAQIIGPVLDVAFPPGKMPNIYNALVVKGRDTLGQEINVTCEVQQLLGNNRVRAVAMSATEGLKRGMDVVDMGNPLSVPVGGATLGRIFNVLGEPVDNLGPVDNRTKAPIHKSAPAFIQLDTKLSIFETGIKVVDLLAPYRRGGKIGLFGGAGVGKTVLIMELINNIAKAHGGVSVFGGVGERTREGNDLYMEMKESGVINEQNLAESKVALVYGQMNEPPGARMRVGLTALTMAEYFRDVNEQDVLLFIDNIFRFVQAGSEVSALLGRMPSAVGYQPTLSTEMGTLQERITSTKKGSITSIQAVYVPADDLTDPAPATTFAHLDATTVLSRGLAAKGIYPAVDPLDSTSTMLQPRIVGEEHYETAQQVKQTLQRYKELQDIIAILGLDELSEEDRLTVARARKIERFLSQPFFVAEVFTGSPGKYVGLAETIRGFKLILSGEFDSLPEQAFYLVGNIDEATAKATNLEMESKLKK</sequence>
<proteinExistence type="inferred from homology"/>
<comment type="function">
    <text evidence="2">Produces ATP from ADP in the presence of a proton gradient across the membrane. The catalytic sites are hosted primarily by the beta subunits.</text>
</comment>
<comment type="catalytic activity">
    <reaction evidence="2">
        <text>ATP + H2O + 4 H(+)(in) = ADP + phosphate + 5 H(+)(out)</text>
        <dbReference type="Rhea" id="RHEA:57720"/>
        <dbReference type="ChEBI" id="CHEBI:15377"/>
        <dbReference type="ChEBI" id="CHEBI:15378"/>
        <dbReference type="ChEBI" id="CHEBI:30616"/>
        <dbReference type="ChEBI" id="CHEBI:43474"/>
        <dbReference type="ChEBI" id="CHEBI:456216"/>
        <dbReference type="EC" id="7.1.2.2"/>
    </reaction>
</comment>
<comment type="subunit">
    <text evidence="2">F-type ATPases have 2 components, CF(1) - the catalytic core - and CF(0) - the membrane proton channel. CF(1) has five subunits: alpha(3), beta(3), gamma(1), delta(1), epsilon(1). CF(0) has four main subunits: a(1), b(1), b'(1) and c(9-12).</text>
</comment>
<comment type="subcellular location">
    <subcellularLocation>
        <location evidence="2">Plastid</location>
        <location evidence="2">Chloroplast thylakoid membrane</location>
        <topology evidence="2">Peripheral membrane protein</topology>
    </subcellularLocation>
</comment>
<comment type="similarity">
    <text evidence="2">Belongs to the ATPase alpha/beta chains family.</text>
</comment>
<keyword id="KW-0066">ATP synthesis</keyword>
<keyword id="KW-0067">ATP-binding</keyword>
<keyword id="KW-0139">CF(1)</keyword>
<keyword id="KW-0150">Chloroplast</keyword>
<keyword id="KW-0375">Hydrogen ion transport</keyword>
<keyword id="KW-0406">Ion transport</keyword>
<keyword id="KW-0472">Membrane</keyword>
<keyword id="KW-0547">Nucleotide-binding</keyword>
<keyword id="KW-0597">Phosphoprotein</keyword>
<keyword id="KW-0934">Plastid</keyword>
<keyword id="KW-0793">Thylakoid</keyword>
<keyword id="KW-1278">Translocase</keyword>
<keyword id="KW-0813">Transport</keyword>
<feature type="chain" id="PRO_0000339624" description="ATP synthase subunit beta, chloroplastic">
    <location>
        <begin position="1"/>
        <end position="502"/>
    </location>
</feature>
<feature type="binding site" evidence="2">
    <location>
        <begin position="176"/>
        <end position="183"/>
    </location>
    <ligand>
        <name>ATP</name>
        <dbReference type="ChEBI" id="CHEBI:30616"/>
    </ligand>
</feature>
<feature type="modified residue" description="Phosphoserine" evidence="1">
    <location>
        <position position="17"/>
    </location>
</feature>
<protein>
    <recommendedName>
        <fullName evidence="2">ATP synthase subunit beta, chloroplastic</fullName>
        <ecNumber evidence="2">7.1.2.2</ecNumber>
    </recommendedName>
    <alternativeName>
        <fullName evidence="2">ATP synthase F1 sector subunit beta</fullName>
    </alternativeName>
    <alternativeName>
        <fullName evidence="2">F-ATPase subunit beta</fullName>
    </alternativeName>
</protein>
<gene>
    <name evidence="2" type="primary">atpB</name>
</gene>
<evidence type="ECO:0000250" key="1">
    <source>
        <dbReference type="UniProtKB" id="P19366"/>
    </source>
</evidence>
<evidence type="ECO:0000255" key="2">
    <source>
        <dbReference type="HAMAP-Rule" id="MF_01347"/>
    </source>
</evidence>